<evidence type="ECO:0000255" key="1">
    <source>
        <dbReference type="HAMAP-Rule" id="MF_04099"/>
    </source>
</evidence>
<evidence type="ECO:0000255" key="2">
    <source>
        <dbReference type="PROSITE-ProRule" id="PRU01269"/>
    </source>
</evidence>
<evidence type="ECO:0000255" key="3">
    <source>
        <dbReference type="PROSITE-ProRule" id="PRU01270"/>
    </source>
</evidence>
<evidence type="ECO:0007829" key="4">
    <source>
        <dbReference type="PDB" id="1ZVA"/>
    </source>
</evidence>
<organism>
    <name type="scientific">Bat coronavirus Rp3/2004</name>
    <name type="common">BtCoV/Rp3/2004</name>
    <name type="synonym">SARS-like coronavirus Rp3</name>
    <dbReference type="NCBI Taxonomy" id="349344"/>
    <lineage>
        <taxon>Viruses</taxon>
        <taxon>Riboviria</taxon>
        <taxon>Orthornavirae</taxon>
        <taxon>Pisuviricota</taxon>
        <taxon>Pisoniviricetes</taxon>
        <taxon>Nidovirales</taxon>
        <taxon>Cornidovirineae</taxon>
        <taxon>Coronaviridae</taxon>
        <taxon>Orthocoronavirinae</taxon>
        <taxon>Betacoronavirus</taxon>
        <taxon>Sarbecovirus</taxon>
        <taxon>Severe acute respiratory syndrome coronavirus</taxon>
    </lineage>
</organism>
<accession>Q3I5J5</accession>
<sequence length="1241" mass="137560">MKILILAFLASLAKAQEGCGIISRKPQPKMAQVSSSRRGVYYNDDIFRSNVLHLTQDYFLPFDSNLTQYFSLNVDSDRFTYFDNPILDFGDGVYFAATEKSNVIRGWIFGSTFDNTTQSAVIVNNSTHIIIRVCNFNLCKEPMYTVSRGAQQSSWVYQSAFNCTYDRVEKSFQLDTAPKTGNFKDLREYVFKNRDGFLSVYQTYTAVNLPRGLPIGFSVLRPILKLPFGINITSYRVVMAMFSQTTSNFLPESAAYYVGNLKYTTFMLSFNENGTITNAIDCAQNPLAELKCTIKNFNVSKGIYQTSNFRVSPTQEVIRFPNITNRCPFDKVFNATRFPNVYAWERTKISDCVADYTVLYNSTSFSTFKCYGVSPSKLIDLCFTSVYADTFLIRSSEVRQVAPGETGVIADYNYKLPDDFTGCVIAWNTAKQDQGQYYYRSHRKTKLKPFERDLSSDENGVRTLSTYDFYPSVPVAYQATRVVVLSFELLNAPATVCGPKLSTQLVKNQCVNFNFNGLKGTGVLTESSKRFQSFQQFGRDTSDFTDSVRDPQTLEILDISPCSFGGVSVITPGTNASSEVAVLYQDVNCTDVPAAIHADQLTPAWRVYSTGTNVFQTQAGCLIGAEHVNASYECDIPIGAGICASYHTASTLRSVGQKSIVAYTMSLGAENSIAYANNSIAIPTNFSISVTTEVMPVSMAKTSVDCTMYICGDSLECSNLLLQYGSFCTQLNRALSGIAIEQDKNTQEVFAQVKQMYKTPAIKDFGGFNFSQILPDPSKPTKRSFIEDLLFNKVTLADAGFMKQYGECLGDISARDLICAQKFNGLTVLPPLLTDEMIAAYTAALVSGTATAGWTFGAGSALQIPFAMQMAYRFNGIGVTQNVLYENQKQIANQFNKAISQIQESLTTTSTALGKLQDVVNQNAQALNTLVKQLSSNFGAISSVLNDILSRLDKVEAEVQIDRLITGRLQSLQTYVTQQLIRAAEIRASANLAATKMSECVLGQSKRVDFCGKGYHLMSFPQAAPHGVVFLHVTYVPSQERNFTTAPAICHEGKAYFPREGVFVSNGTSWFITQRNFYSPQIITTDNTFVAGSCDVVIGIINNTVYDPLQPELDSFKEELDKYFKNHTSPDVDLGDISGINASVVNIQKEIDRLNEVAKNLNESLIDLQELGKYEQYIKWPWYVWLGFIAGLIAIVMVTILLCCMTSCCSCLKGACSCGSCCKFDEDDSEPVLKGVKLHYT</sequence>
<proteinExistence type="evidence at protein level"/>
<feature type="signal peptide" evidence="1">
    <location>
        <begin position="1"/>
        <end position="13"/>
    </location>
</feature>
<feature type="chain" id="PRO_0000043076" description="Spike glycoprotein">
    <location>
        <begin position="14"/>
        <end position="1241"/>
    </location>
</feature>
<feature type="chain" id="PRO_0000444066" description="Spike protein S1" evidence="1">
    <location>
        <begin position="14"/>
        <end position="653"/>
    </location>
</feature>
<feature type="chain" id="PRO_0000043078" description="Spike protein S2" evidence="1">
    <location>
        <begin position="654"/>
        <end position="1241"/>
    </location>
</feature>
<feature type="chain" id="PRO_0000444067" description="Spike protein S2'" evidence="1">
    <location>
        <begin position="784"/>
        <end position="1241"/>
    </location>
</feature>
<feature type="topological domain" description="Extracellular" evidence="1">
    <location>
        <begin position="14"/>
        <end position="1181"/>
    </location>
</feature>
<feature type="transmembrane region" description="Helical" evidence="1">
    <location>
        <begin position="1182"/>
        <end position="1202"/>
    </location>
</feature>
<feature type="topological domain" description="Cytoplasmic" evidence="1">
    <location>
        <begin position="1203"/>
        <end position="1241"/>
    </location>
</feature>
<feature type="domain" description="BetaCoV S1-NTD" evidence="3">
    <location>
        <begin position="14"/>
        <end position="294"/>
    </location>
</feature>
<feature type="domain" description="BetaCoV S1-CTD" evidence="2">
    <location>
        <begin position="325"/>
        <end position="499"/>
    </location>
</feature>
<feature type="region of interest" description="Fusion peptide 1" evidence="1">
    <location>
        <begin position="784"/>
        <end position="805"/>
    </location>
</feature>
<feature type="region of interest" description="Fusion peptide 2" evidence="1">
    <location>
        <begin position="803"/>
        <end position="823"/>
    </location>
</feature>
<feature type="region of interest" description="Heptad repeat 1" evidence="1">
    <location>
        <begin position="888"/>
        <end position="938"/>
    </location>
</feature>
<feature type="region of interest" description="Heptad repeat 2" evidence="1">
    <location>
        <begin position="1131"/>
        <end position="1170"/>
    </location>
</feature>
<feature type="coiled-coil region" evidence="1">
    <location>
        <begin position="917"/>
        <end position="961"/>
    </location>
</feature>
<feature type="coiled-coil region" evidence="1">
    <location>
        <begin position="1143"/>
        <end position="1171"/>
    </location>
</feature>
<feature type="short sequence motif" description="KxHxx" evidence="1">
    <location>
        <begin position="1237"/>
        <end position="1241"/>
    </location>
</feature>
<feature type="site" description="Cleavage" evidence="1">
    <location>
        <begin position="653"/>
        <end position="654"/>
    </location>
</feature>
<feature type="site" description="Cleavage" evidence="1">
    <location>
        <begin position="783"/>
        <end position="784"/>
    </location>
</feature>
<feature type="glycosylation site" description="N-linked (GlcNAc...) asparagine; by host" evidence="1">
    <location>
        <position position="65"/>
    </location>
</feature>
<feature type="glycosylation site" description="N-linked (GlcNAc...) asparagine; by host" evidence="1">
    <location>
        <position position="115"/>
    </location>
</feature>
<feature type="glycosylation site" description="N-linked (GlcNAc...) asparagine; by host" evidence="1">
    <location>
        <position position="124"/>
    </location>
</feature>
<feature type="glycosylation site" description="N-linked (GlcNAc...) asparagine; by host" evidence="1">
    <location>
        <position position="125"/>
    </location>
</feature>
<feature type="glycosylation site" description="N-linked (GlcNAc...) asparagine; by host" evidence="1">
    <location>
        <position position="162"/>
    </location>
</feature>
<feature type="glycosylation site" description="N-linked (GlcNAc...) asparagine; by host" evidence="1">
    <location>
        <position position="231"/>
    </location>
</feature>
<feature type="glycosylation site" description="N-linked (GlcNAc...) asparagine; by host" evidence="1">
    <location>
        <position position="273"/>
    </location>
</feature>
<feature type="glycosylation site" description="N-linked (GlcNAc...) asparagine; by host" evidence="1">
    <location>
        <position position="298"/>
    </location>
</feature>
<feature type="glycosylation site" description="N-linked (GlcNAc...) asparagine; by host" evidence="1">
    <location>
        <position position="322"/>
    </location>
</feature>
<feature type="glycosylation site" description="N-linked (GlcNAc...) asparagine; by host" evidence="1">
    <location>
        <position position="334"/>
    </location>
</feature>
<feature type="glycosylation site" description="N-linked (GlcNAc...) asparagine; by host" evidence="1">
    <location>
        <position position="361"/>
    </location>
</feature>
<feature type="glycosylation site" description="N-linked (GlcNAc...) asparagine; by host" evidence="1">
    <location>
        <position position="575"/>
    </location>
</feature>
<feature type="glycosylation site" description="N-linked (GlcNAc...) asparagine; by host" evidence="1">
    <location>
        <position position="588"/>
    </location>
</feature>
<feature type="glycosylation site" description="N-linked (GlcNAc...) asparagine; by host" evidence="1">
    <location>
        <position position="629"/>
    </location>
</feature>
<feature type="glycosylation site" description="N-linked (GlcNAc...) asparagine; by host" evidence="1">
    <location>
        <position position="677"/>
    </location>
</feature>
<feature type="glycosylation site" description="N-linked (GlcNAc...) asparagine; by host" evidence="1">
    <location>
        <position position="685"/>
    </location>
</feature>
<feature type="glycosylation site" description="N-linked (GlcNAc...) asparagine; by host" evidence="1">
    <location>
        <position position="769"/>
    </location>
</feature>
<feature type="glycosylation site" description="N-linked (GlcNAc...) asparagine; by host" evidence="1">
    <location>
        <position position="1042"/>
    </location>
</feature>
<feature type="glycosylation site" description="N-linked (GlcNAc...) asparagine; by host" evidence="1">
    <location>
        <position position="1066"/>
    </location>
</feature>
<feature type="glycosylation site" description="N-linked (GlcNAc...) asparagine; by host" evidence="1">
    <location>
        <position position="1102"/>
    </location>
</feature>
<feature type="glycosylation site" description="N-linked (GlcNAc...) asparagine; by host" evidence="1">
    <location>
        <position position="1126"/>
    </location>
</feature>
<feature type="glycosylation site" description="N-linked (GlcNAc...) asparagine; by host" evidence="1">
    <location>
        <position position="1141"/>
    </location>
</feature>
<feature type="glycosylation site" description="N-linked (GlcNAc...) asparagine; by host" evidence="1">
    <location>
        <position position="1162"/>
    </location>
</feature>
<feature type="disulfide bond" evidence="3">
    <location>
        <begin position="19"/>
        <end position="139"/>
    </location>
</feature>
<feature type="disulfide bond" evidence="3">
    <location>
        <begin position="134"/>
        <end position="163"/>
    </location>
</feature>
<feature type="disulfide bond" evidence="3">
    <location>
        <begin position="282"/>
        <end position="292"/>
    </location>
</feature>
<feature type="disulfide bond" evidence="2">
    <location>
        <begin position="327"/>
        <end position="352"/>
    </location>
</feature>
<feature type="disulfide bond" evidence="2">
    <location>
        <begin position="370"/>
        <end position="423"/>
    </location>
</feature>
<feature type="disulfide bond" evidence="2">
    <location>
        <begin position="382"/>
        <end position="497"/>
    </location>
</feature>
<feature type="disulfide bond" evidence="1">
    <location>
        <begin position="808"/>
        <end position="819"/>
    </location>
</feature>
<feature type="helix" evidence="4">
    <location>
        <begin position="913"/>
        <end position="948"/>
    </location>
</feature>
<name>SPIKE_BCRP3</name>
<protein>
    <recommendedName>
        <fullName evidence="1">Spike glycoprotein</fullName>
        <shortName evidence="1">S glycoprotein</shortName>
    </recommendedName>
    <alternativeName>
        <fullName evidence="1">E2</fullName>
    </alternativeName>
    <alternativeName>
        <fullName evidence="1">Peplomer protein</fullName>
    </alternativeName>
    <component>
        <recommendedName>
            <fullName evidence="1">Spike protein S1</fullName>
        </recommendedName>
    </component>
    <component>
        <recommendedName>
            <fullName evidence="1">Spike protein S2</fullName>
        </recommendedName>
    </component>
    <component>
        <recommendedName>
            <fullName evidence="1">Spike protein S2'</fullName>
        </recommendedName>
    </component>
</protein>
<dbReference type="EMBL" id="DQ071615">
    <property type="protein sequence ID" value="AAZ67052.1"/>
    <property type="molecule type" value="Genomic_RNA"/>
</dbReference>
<dbReference type="PDB" id="1ZVA">
    <property type="method" value="X-ray"/>
    <property type="resolution" value="1.50 A"/>
    <property type="chains" value="A=912-948, A=1135-1169"/>
</dbReference>
<dbReference type="PDBsum" id="1ZVA"/>
<dbReference type="BMRB" id="Q3I5J5"/>
<dbReference type="EMDB" id="EMD-13742"/>
<dbReference type="SMR" id="Q3I5J5"/>
<dbReference type="GlyCosmos" id="Q3I5J5">
    <property type="glycosylation" value="23 sites, No reported glycans"/>
</dbReference>
<dbReference type="Proteomes" id="UP000006570">
    <property type="component" value="Genome"/>
</dbReference>
<dbReference type="GO" id="GO:0044173">
    <property type="term" value="C:host cell endoplasmic reticulum-Golgi intermediate compartment membrane"/>
    <property type="evidence" value="ECO:0007669"/>
    <property type="project" value="UniProtKB-SubCell"/>
</dbReference>
<dbReference type="GO" id="GO:0020002">
    <property type="term" value="C:host cell plasma membrane"/>
    <property type="evidence" value="ECO:0007669"/>
    <property type="project" value="UniProtKB-SubCell"/>
</dbReference>
<dbReference type="GO" id="GO:0016020">
    <property type="term" value="C:membrane"/>
    <property type="evidence" value="ECO:0007669"/>
    <property type="project" value="UniProtKB-UniRule"/>
</dbReference>
<dbReference type="GO" id="GO:0019031">
    <property type="term" value="C:viral envelope"/>
    <property type="evidence" value="ECO:0007669"/>
    <property type="project" value="UniProtKB-UniRule"/>
</dbReference>
<dbReference type="GO" id="GO:0055036">
    <property type="term" value="C:virion membrane"/>
    <property type="evidence" value="ECO:0007669"/>
    <property type="project" value="UniProtKB-SubCell"/>
</dbReference>
<dbReference type="GO" id="GO:0075509">
    <property type="term" value="P:endocytosis involved in viral entry into host cell"/>
    <property type="evidence" value="ECO:0007669"/>
    <property type="project" value="UniProtKB-UniRule"/>
</dbReference>
<dbReference type="GO" id="GO:0039654">
    <property type="term" value="P:fusion of virus membrane with host endosome membrane"/>
    <property type="evidence" value="ECO:0007669"/>
    <property type="project" value="UniProtKB-UniRule"/>
</dbReference>
<dbReference type="GO" id="GO:0019064">
    <property type="term" value="P:fusion of virus membrane with host plasma membrane"/>
    <property type="evidence" value="ECO:0007669"/>
    <property type="project" value="UniProtKB-UniRule"/>
</dbReference>
<dbReference type="GO" id="GO:0046813">
    <property type="term" value="P:receptor-mediated virion attachment to host cell"/>
    <property type="evidence" value="ECO:0007669"/>
    <property type="project" value="UniProtKB-UniRule"/>
</dbReference>
<dbReference type="CDD" id="cd21624">
    <property type="entry name" value="SARS-CoV-like_Spike_S1_NTD"/>
    <property type="match status" value="1"/>
</dbReference>
<dbReference type="CDD" id="cd21477">
    <property type="entry name" value="SARS-CoV-like_Spike_S1_RBD"/>
    <property type="match status" value="1"/>
</dbReference>
<dbReference type="CDD" id="cd22378">
    <property type="entry name" value="SARS-CoV-like_Spike_SD1-2_S1-S2_S2"/>
    <property type="match status" value="1"/>
</dbReference>
<dbReference type="FunFam" id="1.20.5.300:FF:000003">
    <property type="entry name" value="Spike glycoprotein"/>
    <property type="match status" value="1"/>
</dbReference>
<dbReference type="Gene3D" id="1.20.5.300">
    <property type="match status" value="1"/>
</dbReference>
<dbReference type="Gene3D" id="3.30.70.1840">
    <property type="match status" value="2"/>
</dbReference>
<dbReference type="Gene3D" id="1.20.5.790">
    <property type="entry name" value="Single helix bin"/>
    <property type="match status" value="1"/>
</dbReference>
<dbReference type="Gene3D" id="2.60.120.960">
    <property type="entry name" value="Spike glycoprotein, N-terminal domain"/>
    <property type="match status" value="1"/>
</dbReference>
<dbReference type="HAMAP" id="MF_04099">
    <property type="entry name" value="BETA_CORONA_SPIKE"/>
    <property type="match status" value="1"/>
</dbReference>
<dbReference type="InterPro" id="IPR032500">
    <property type="entry name" value="bCoV_S1_N"/>
</dbReference>
<dbReference type="InterPro" id="IPR042578">
    <property type="entry name" value="BETA_CORONA_SPIKE"/>
</dbReference>
<dbReference type="InterPro" id="IPR043473">
    <property type="entry name" value="S2_sf_CoV"/>
</dbReference>
<dbReference type="InterPro" id="IPR043002">
    <property type="entry name" value="Spike_N_sf"/>
</dbReference>
<dbReference type="InterPro" id="IPR044341">
    <property type="entry name" value="Spike_S1_N_SARS-CoV-like"/>
</dbReference>
<dbReference type="InterPro" id="IPR018548">
    <property type="entry name" value="Spike_S1_RBD_bCoV"/>
</dbReference>
<dbReference type="InterPro" id="IPR036326">
    <property type="entry name" value="Spike_S1_RBD_sf_bCoV"/>
</dbReference>
<dbReference type="InterPro" id="IPR002552">
    <property type="entry name" value="Spike_S2_CoV"/>
</dbReference>
<dbReference type="InterPro" id="IPR044873">
    <property type="entry name" value="Spike_S2_CoV_HR1"/>
</dbReference>
<dbReference type="InterPro" id="IPR044874">
    <property type="entry name" value="Spike_S2_CoV_HR2"/>
</dbReference>
<dbReference type="Pfam" id="PF16451">
    <property type="entry name" value="bCoV_S1_N"/>
    <property type="match status" value="1"/>
</dbReference>
<dbReference type="Pfam" id="PF09408">
    <property type="entry name" value="bCoV_S1_RBD"/>
    <property type="match status" value="1"/>
</dbReference>
<dbReference type="Pfam" id="PF01601">
    <property type="entry name" value="CoV_S2"/>
    <property type="match status" value="1"/>
</dbReference>
<dbReference type="SUPFAM" id="SSF111474">
    <property type="entry name" value="Coronavirus S2 glycoprotein"/>
    <property type="match status" value="2"/>
</dbReference>
<dbReference type="SUPFAM" id="SSF143587">
    <property type="entry name" value="SARS receptor-binding domain-like"/>
    <property type="match status" value="1"/>
</dbReference>
<dbReference type="PROSITE" id="PS51921">
    <property type="entry name" value="BCOV_S1_CTD"/>
    <property type="match status" value="1"/>
</dbReference>
<dbReference type="PROSITE" id="PS51922">
    <property type="entry name" value="BCOV_S1_NTD"/>
    <property type="match status" value="1"/>
</dbReference>
<dbReference type="PROSITE" id="PS51923">
    <property type="entry name" value="COV_S2_HR1"/>
    <property type="match status" value="1"/>
</dbReference>
<dbReference type="PROSITE" id="PS51924">
    <property type="entry name" value="COV_S2_HR2"/>
    <property type="match status" value="1"/>
</dbReference>
<organismHost>
    <name type="scientific">Rhinolophus ferrumequinum</name>
    <name type="common">Greater horseshoe bat</name>
    <dbReference type="NCBI Taxonomy" id="59479"/>
</organismHost>
<organismHost>
    <name type="scientific">Rhinolophus macrotis</name>
    <name type="common">Big-eared horseshoe bat</name>
    <dbReference type="NCBI Taxonomy" id="196889"/>
</organismHost>
<organismHost>
    <name type="scientific">Rhinolophus pearsonii</name>
    <dbReference type="NCBI Taxonomy" id="188571"/>
</organismHost>
<organismHost>
    <name type="scientific">Rhinolophus sinicus</name>
    <name type="common">Chinese rufous horseshoe bat</name>
    <dbReference type="NCBI Taxonomy" id="89399"/>
</organismHost>
<keyword id="KW-0002">3D-structure</keyword>
<keyword id="KW-0175">Coiled coil</keyword>
<keyword id="KW-1015">Disulfide bond</keyword>
<keyword id="KW-1170">Fusion of virus membrane with host endosomal membrane</keyword>
<keyword id="KW-1168">Fusion of virus membrane with host membrane</keyword>
<keyword id="KW-0325">Glycoprotein</keyword>
<keyword id="KW-1032">Host cell membrane</keyword>
<keyword id="KW-1043">Host membrane</keyword>
<keyword id="KW-0945">Host-virus interaction</keyword>
<keyword id="KW-0449">Lipoprotein</keyword>
<keyword id="KW-0472">Membrane</keyword>
<keyword id="KW-0564">Palmitate</keyword>
<keyword id="KW-0732">Signal</keyword>
<keyword id="KW-0812">Transmembrane</keyword>
<keyword id="KW-1133">Transmembrane helix</keyword>
<keyword id="KW-1161">Viral attachment to host cell</keyword>
<keyword id="KW-0261">Viral envelope protein</keyword>
<keyword id="KW-1162">Viral penetration into host cytoplasm</keyword>
<keyword id="KW-0946">Virion</keyword>
<keyword id="KW-0843">Virulence</keyword>
<keyword id="KW-1160">Virus entry into host cell</keyword>
<gene>
    <name evidence="1" type="primary">S</name>
    <name type="ORF">2</name>
</gene>
<reference key="1">
    <citation type="journal article" date="2005" name="Science">
        <title>Bats are natural reservoirs of SARS-like coronaviruses.</title>
        <authorList>
            <person name="Li W."/>
            <person name="Shi Z."/>
            <person name="Yu M."/>
            <person name="Ren W."/>
            <person name="Smith C."/>
            <person name="Epstein J.H."/>
            <person name="Wang H."/>
            <person name="Crameri G."/>
            <person name="Hu Z."/>
            <person name="Zhang H."/>
            <person name="Zhang J."/>
            <person name="McEachern J."/>
            <person name="Field H."/>
            <person name="Daszak P."/>
            <person name="Eaton B.T."/>
            <person name="Zhang S."/>
            <person name="Wang L.F."/>
        </authorList>
    </citation>
    <scope>NUCLEOTIDE SEQUENCE [GENOMIC RNA]</scope>
</reference>
<comment type="function">
    <molecule>Spike protein S1</molecule>
    <text evidence="1">Attaches the virion to the cell membrane by interacting with host receptor, initiating the infection.</text>
</comment>
<comment type="function">
    <molecule>Spike protein S2</molecule>
    <text evidence="1">Mediates fusion of the virion and cellular membranes by acting as a class I viral fusion protein. Under the current model, the protein has at least three conformational states: pre-fusion native state, pre-hairpin intermediate state, and post-fusion hairpin state. During viral and target cell membrane fusion, the coiled coil regions (heptad repeats) assume a trimer-of-hairpins structure, positioning the fusion peptide in close proximity to the C-terminal region of the ectodomain. The formation of this structure appears to drive apposition and subsequent fusion of viral and target cell membranes.</text>
</comment>
<comment type="function">
    <molecule>Spike protein S2'</molecule>
    <text evidence="1">Acts as a viral fusion peptide which is unmasked following S2 cleavage occurring upon virus endocytosis.</text>
</comment>
<comment type="subunit">
    <text evidence="1">Homotrimer; each monomer consists of a S1 and a S2 subunit. The resulting peplomers protrude from the virus surface as spikes.</text>
</comment>
<comment type="subcellular location">
    <subcellularLocation>
        <location evidence="1">Virion membrane</location>
        <topology evidence="1">Single-pass type I membrane protein</topology>
    </subcellularLocation>
    <subcellularLocation>
        <location evidence="1">Host endoplasmic reticulum-Golgi intermediate compartment membrane</location>
        <topology evidence="1">Single-pass type I membrane protein</topology>
    </subcellularLocation>
    <subcellularLocation>
        <location evidence="1">Host cell membrane</location>
        <topology evidence="1">Single-pass type I membrane protein</topology>
    </subcellularLocation>
    <text evidence="1">Accumulates in the endoplasmic reticulum-Golgi intermediate compartment, where it participates in virus particle assembly. Some S oligomers are transported to the host plasma membrane, where they may mediate cell-cell fusion.</text>
</comment>
<comment type="domain">
    <text evidence="1">Fusion peptide 1 (FP1) and fusion peptide 2 (FP2) function cooperatively and have a membrane-ordering effect on lipid headgroups and shallow hydrophobic regions of target bilayers. They are considered as two domains of an extended, bipartite FP. The membrane-ordering activity is calcium-dependent and also dependent on correct folding, which is maintained by an internal disulfide bond in FP2.</text>
</comment>
<comment type="PTM">
    <text evidence="1">Specific enzymatic cleavages in vivo yield mature proteins. The precursor is processed into S1 and S2 by host cell furin or another cellular protease to yield the mature S1 and S2 proteins. Additionally, a second cleavage leads to the release of a fusion peptide after viral attachment to host cell receptor.</text>
</comment>
<comment type="PTM">
    <text evidence="1">The cytoplasmic Cys-rich domain is palmitoylated. Spike glycoprotein is digested within host endosomes.</text>
</comment>
<comment type="miscellaneous">
    <text>Bat coronavirus rp3 is highly similar to SARS-CoV (SARS-like).</text>
</comment>
<comment type="similarity">
    <text evidence="1">Belongs to the betacoronaviruses spike protein family.</text>
</comment>